<keyword id="KW-0028">Amino-acid biosynthesis</keyword>
<keyword id="KW-0963">Cytoplasm</keyword>
<keyword id="KW-0368">Histidine biosynthesis</keyword>
<proteinExistence type="inferred from homology"/>
<feature type="chain" id="PRO_0000242834" description="ATP phosphoribosyltransferase regulatory subunit">
    <location>
        <begin position="1"/>
        <end position="412"/>
    </location>
</feature>
<protein>
    <recommendedName>
        <fullName evidence="1">ATP phosphoribosyltransferase regulatory subunit</fullName>
    </recommendedName>
</protein>
<evidence type="ECO:0000255" key="1">
    <source>
        <dbReference type="HAMAP-Rule" id="MF_00125"/>
    </source>
</evidence>
<comment type="function">
    <text evidence="1">Required for the first step of histidine biosynthesis. May allow the feedback regulation of ATP phosphoribosyltransferase activity by histidine.</text>
</comment>
<comment type="pathway">
    <text evidence="1">Amino-acid biosynthesis; L-histidine biosynthesis; L-histidine from 5-phospho-alpha-D-ribose 1-diphosphate: step 1/9.</text>
</comment>
<comment type="subunit">
    <text evidence="1">Heteromultimer composed of HisG and HisZ subunits.</text>
</comment>
<comment type="subcellular location">
    <subcellularLocation>
        <location evidence="1">Cytoplasm</location>
    </subcellularLocation>
</comment>
<comment type="miscellaneous">
    <text>This function is generally fulfilled by the C-terminal part of HisG, which is missing in some bacteria such as this one.</text>
</comment>
<comment type="similarity">
    <text evidence="1">Belongs to the class-II aminoacyl-tRNA synthetase family. HisZ subfamily.</text>
</comment>
<reference key="1">
    <citation type="journal article" date="2005" name="Nat. Biotechnol.">
        <title>Genome sequence of the chlorinated compound-respiring bacterium Dehalococcoides species strain CBDB1.</title>
        <authorList>
            <person name="Kube M."/>
            <person name="Beck A."/>
            <person name="Zinder S.H."/>
            <person name="Kuhl H."/>
            <person name="Reinhardt R."/>
            <person name="Adrian L."/>
        </authorList>
    </citation>
    <scope>NUCLEOTIDE SEQUENCE [LARGE SCALE GENOMIC DNA]</scope>
    <source>
        <strain>CBDB1</strain>
    </source>
</reference>
<gene>
    <name evidence="1" type="primary">hisZ</name>
    <name type="ordered locus">cbdbA829</name>
</gene>
<organism>
    <name type="scientific">Dehalococcoides mccartyi (strain CBDB1)</name>
    <dbReference type="NCBI Taxonomy" id="255470"/>
    <lineage>
        <taxon>Bacteria</taxon>
        <taxon>Bacillati</taxon>
        <taxon>Chloroflexota</taxon>
        <taxon>Dehalococcoidia</taxon>
        <taxon>Dehalococcoidales</taxon>
        <taxon>Dehalococcoidaceae</taxon>
        <taxon>Dehalococcoides</taxon>
    </lineage>
</organism>
<sequence>MIARCKGCSDLLPEDMLRFRYIESIFHDSCITWGYEEVRTPMLEYLSLFTSSGTLTPQMLKRVYSFLDWDGWSGERVVLRPDGTIPAARLYIDSLQEMDVARLCYTSSIFRFDETGKKSRENWQLGAELIGVTSPEANAELITLALETLARLGFEDVELRLSHAQLIKAVLAQLEPNADEQHKIFDQLLDGDIALMSRLETEKPELFRTLKLLMENKGTSASFLKNVMAMAGTAGGELEEPLNDFIAGVDVLDKLGVSYQIDLASGKGFEYYTGVIFHLFVNGEHVGGGGRYDKLIPLLGGPDKPAAGFALYLNRLIPMIDAEDMYDMVEEKILIKYQGDNLKNAYEIANLIRECGISAELFYPGVDTAAYGWAVTVKAEDCYEVTDLIEDKTLELKEQSEVIYLLNGEEDA</sequence>
<accession>Q3ZXL5</accession>
<dbReference type="EMBL" id="AJ965256">
    <property type="protein sequence ID" value="CAI82973.1"/>
    <property type="molecule type" value="Genomic_DNA"/>
</dbReference>
<dbReference type="RefSeq" id="WP_011309324.1">
    <property type="nucleotide sequence ID" value="NC_007356.1"/>
</dbReference>
<dbReference type="SMR" id="Q3ZXL5"/>
<dbReference type="KEGG" id="deh:cbdbA829"/>
<dbReference type="HOGENOM" id="CLU_025113_3_0_0"/>
<dbReference type="UniPathway" id="UPA00031">
    <property type="reaction ID" value="UER00006"/>
</dbReference>
<dbReference type="Proteomes" id="UP000000433">
    <property type="component" value="Chromosome"/>
</dbReference>
<dbReference type="GO" id="GO:0005737">
    <property type="term" value="C:cytoplasm"/>
    <property type="evidence" value="ECO:0007669"/>
    <property type="project" value="UniProtKB-SubCell"/>
</dbReference>
<dbReference type="GO" id="GO:0004821">
    <property type="term" value="F:histidine-tRNA ligase activity"/>
    <property type="evidence" value="ECO:0007669"/>
    <property type="project" value="TreeGrafter"/>
</dbReference>
<dbReference type="GO" id="GO:0006427">
    <property type="term" value="P:histidyl-tRNA aminoacylation"/>
    <property type="evidence" value="ECO:0007669"/>
    <property type="project" value="TreeGrafter"/>
</dbReference>
<dbReference type="GO" id="GO:0000105">
    <property type="term" value="P:L-histidine biosynthetic process"/>
    <property type="evidence" value="ECO:0007669"/>
    <property type="project" value="UniProtKB-UniRule"/>
</dbReference>
<dbReference type="CDD" id="cd00773">
    <property type="entry name" value="HisRS-like_core"/>
    <property type="match status" value="1"/>
</dbReference>
<dbReference type="Gene3D" id="3.30.930.10">
    <property type="entry name" value="Bira Bifunctional Protein, Domain 2"/>
    <property type="match status" value="1"/>
</dbReference>
<dbReference type="HAMAP" id="MF_00125">
    <property type="entry name" value="HisZ"/>
    <property type="match status" value="1"/>
</dbReference>
<dbReference type="InterPro" id="IPR006195">
    <property type="entry name" value="aa-tRNA-synth_II"/>
</dbReference>
<dbReference type="InterPro" id="IPR045864">
    <property type="entry name" value="aa-tRNA-synth_II/BPL/LPL"/>
</dbReference>
<dbReference type="InterPro" id="IPR041715">
    <property type="entry name" value="HisRS-like_core"/>
</dbReference>
<dbReference type="InterPro" id="IPR004516">
    <property type="entry name" value="HisRS/HisZ"/>
</dbReference>
<dbReference type="InterPro" id="IPR004517">
    <property type="entry name" value="HisZ"/>
</dbReference>
<dbReference type="PANTHER" id="PTHR43707:SF1">
    <property type="entry name" value="HISTIDINE--TRNA LIGASE, MITOCHONDRIAL-RELATED"/>
    <property type="match status" value="1"/>
</dbReference>
<dbReference type="PANTHER" id="PTHR43707">
    <property type="entry name" value="HISTIDYL-TRNA SYNTHETASE"/>
    <property type="match status" value="1"/>
</dbReference>
<dbReference type="Pfam" id="PF13393">
    <property type="entry name" value="tRNA-synt_His"/>
    <property type="match status" value="1"/>
</dbReference>
<dbReference type="PIRSF" id="PIRSF001549">
    <property type="entry name" value="His-tRNA_synth"/>
    <property type="match status" value="1"/>
</dbReference>
<dbReference type="SUPFAM" id="SSF55681">
    <property type="entry name" value="Class II aaRS and biotin synthetases"/>
    <property type="match status" value="1"/>
</dbReference>
<dbReference type="PROSITE" id="PS50862">
    <property type="entry name" value="AA_TRNA_LIGASE_II"/>
    <property type="match status" value="1"/>
</dbReference>
<name>HISZ_DEHMC</name>